<protein>
    <recommendedName>
        <fullName>Sensor histidine kinase MtrB</fullName>
        <ecNumber>2.7.13.3</ecNumber>
    </recommendedName>
</protein>
<keyword id="KW-0067">ATP-binding</keyword>
<keyword id="KW-1003">Cell membrane</keyword>
<keyword id="KW-0418">Kinase</keyword>
<keyword id="KW-0472">Membrane</keyword>
<keyword id="KW-0547">Nucleotide-binding</keyword>
<keyword id="KW-0597">Phosphoprotein</keyword>
<keyword id="KW-1185">Reference proteome</keyword>
<keyword id="KW-0808">Transferase</keyword>
<keyword id="KW-0812">Transmembrane</keyword>
<keyword id="KW-1133">Transmembrane helix</keyword>
<keyword id="KW-0902">Two-component regulatory system</keyword>
<proteinExistence type="inferred from homology"/>
<sequence>MIFSSRRRIRGRWGRSGPMMRGMGALTRVVGVVWRRSLQLRVVALTFGLSLAVILALGFVLTSQLTSRVLDVKVRVAIEQIERARTTVTGIVNGEETRSLDSSLQLARNTLTSKTDPTSGAGLVGAFDAVLIVPGDGPRTATTAGPVDQVPNSLRGFIKAGQAAYQYATVHTEGFSGPALIIGTPTSSQVTNLELYLIFPLKNEQATVTLVRGTMATGGMVLLVLLSGIALLVSRQVVVPVRSASRIAERFAEGHLSERMPVRGEDDMARLAVSFNDMAESLSRQITQLEEFGNLQRRFTSDVSHELRTPLTTVRMAADLIYDHSSDLDPTLRRSTELMVSELDRFETLLNDLLEISRHDAGVAELSVEAVDLRVMVNNALGNVGHLAEEAGIELLVDMPVDEVIAEVDARRVERILRNLIANAIDHSEHKPVRIRMAADEDTVAVTVRDYGIGLRPGEEKLVFSRFWRSDPSRVRRSGGTGLGLAISIEDARLHQGRLEAWGEPGQGACFRLTLPLVRGHKVTTSPLPMKPILQPSPQASTAGQQHGTQRQRLREHAERSR</sequence>
<comment type="function">
    <text evidence="1">Member of the two-component regulatory system MtrA/MtrB. Seems to function as a membrane-associated protein kinase that phosphorylates MtrA in response to environmental signals (By similarity).</text>
</comment>
<comment type="catalytic activity">
    <reaction>
        <text>ATP + protein L-histidine = ADP + protein N-phospho-L-histidine.</text>
        <dbReference type="EC" id="2.7.13.3"/>
    </reaction>
</comment>
<comment type="subcellular location">
    <subcellularLocation>
        <location evidence="6">Cell membrane</location>
        <topology evidence="6">Multi-pass membrane protein</topology>
    </subcellularLocation>
</comment>
<evidence type="ECO:0000250" key="1"/>
<evidence type="ECO:0000255" key="2"/>
<evidence type="ECO:0000255" key="3">
    <source>
        <dbReference type="PROSITE-ProRule" id="PRU00102"/>
    </source>
</evidence>
<evidence type="ECO:0000255" key="4">
    <source>
        <dbReference type="PROSITE-ProRule" id="PRU00107"/>
    </source>
</evidence>
<evidence type="ECO:0000256" key="5">
    <source>
        <dbReference type="SAM" id="MobiDB-lite"/>
    </source>
</evidence>
<evidence type="ECO:0000305" key="6"/>
<organism>
    <name type="scientific">Mycobacterium leprae (strain TN)</name>
    <dbReference type="NCBI Taxonomy" id="272631"/>
    <lineage>
        <taxon>Bacteria</taxon>
        <taxon>Bacillati</taxon>
        <taxon>Actinomycetota</taxon>
        <taxon>Actinomycetes</taxon>
        <taxon>Mycobacteriales</taxon>
        <taxon>Mycobacteriaceae</taxon>
        <taxon>Mycobacterium</taxon>
    </lineage>
</organism>
<reference key="1">
    <citation type="journal article" date="2001" name="Nature">
        <title>Massive gene decay in the leprosy bacillus.</title>
        <authorList>
            <person name="Cole S.T."/>
            <person name="Eiglmeier K."/>
            <person name="Parkhill J."/>
            <person name="James K.D."/>
            <person name="Thomson N.R."/>
            <person name="Wheeler P.R."/>
            <person name="Honore N."/>
            <person name="Garnier T."/>
            <person name="Churcher C.M."/>
            <person name="Harris D.E."/>
            <person name="Mungall K.L."/>
            <person name="Basham D."/>
            <person name="Brown D."/>
            <person name="Chillingworth T."/>
            <person name="Connor R."/>
            <person name="Davies R.M."/>
            <person name="Devlin K."/>
            <person name="Duthoy S."/>
            <person name="Feltwell T."/>
            <person name="Fraser A."/>
            <person name="Hamlin N."/>
            <person name="Holroyd S."/>
            <person name="Hornsby T."/>
            <person name="Jagels K."/>
            <person name="Lacroix C."/>
            <person name="Maclean J."/>
            <person name="Moule S."/>
            <person name="Murphy L.D."/>
            <person name="Oliver K."/>
            <person name="Quail M.A."/>
            <person name="Rajandream M.A."/>
            <person name="Rutherford K.M."/>
            <person name="Rutter S."/>
            <person name="Seeger K."/>
            <person name="Simon S."/>
            <person name="Simmonds M."/>
            <person name="Skelton J."/>
            <person name="Squares R."/>
            <person name="Squares S."/>
            <person name="Stevens K."/>
            <person name="Taylor K."/>
            <person name="Whitehead S."/>
            <person name="Woodward J.R."/>
            <person name="Barrell B.G."/>
        </authorList>
    </citation>
    <scope>NUCLEOTIDE SEQUENCE [LARGE SCALE GENOMIC DNA]</scope>
    <source>
        <strain>TN</strain>
    </source>
</reference>
<feature type="chain" id="PRO_0000074807" description="Sensor histidine kinase MtrB">
    <location>
        <begin position="1"/>
        <end position="562"/>
    </location>
</feature>
<feature type="transmembrane region" description="Helical" evidence="2">
    <location>
        <begin position="42"/>
        <end position="62"/>
    </location>
</feature>
<feature type="transmembrane region" description="Helical" evidence="2">
    <location>
        <begin position="213"/>
        <end position="233"/>
    </location>
</feature>
<feature type="domain" description="HAMP" evidence="3">
    <location>
        <begin position="235"/>
        <end position="287"/>
    </location>
</feature>
<feature type="domain" description="Histidine kinase" evidence="4">
    <location>
        <begin position="302"/>
        <end position="519"/>
    </location>
</feature>
<feature type="region of interest" description="Disordered" evidence="5">
    <location>
        <begin position="526"/>
        <end position="562"/>
    </location>
</feature>
<feature type="compositionally biased region" description="Polar residues" evidence="5">
    <location>
        <begin position="536"/>
        <end position="551"/>
    </location>
</feature>
<feature type="compositionally biased region" description="Basic and acidic residues" evidence="5">
    <location>
        <begin position="553"/>
        <end position="562"/>
    </location>
</feature>
<dbReference type="EC" id="2.7.13.3"/>
<dbReference type="EMBL" id="AL583919">
    <property type="protein sequence ID" value="CAC30283.1"/>
    <property type="molecule type" value="Genomic_DNA"/>
</dbReference>
<dbReference type="PIR" id="G87005">
    <property type="entry name" value="G87005"/>
</dbReference>
<dbReference type="RefSeq" id="NP_301598.1">
    <property type="nucleotide sequence ID" value="NC_002677.1"/>
</dbReference>
<dbReference type="RefSeq" id="WP_010907922.1">
    <property type="nucleotide sequence ID" value="NC_002677.1"/>
</dbReference>
<dbReference type="SMR" id="Q9CCJ1"/>
<dbReference type="STRING" id="272631.gene:17574598"/>
<dbReference type="KEGG" id="mle:ML0774"/>
<dbReference type="PATRIC" id="fig|272631.5.peg.1392"/>
<dbReference type="Leproma" id="ML0774"/>
<dbReference type="eggNOG" id="COG5000">
    <property type="taxonomic scope" value="Bacteria"/>
</dbReference>
<dbReference type="eggNOG" id="COG5002">
    <property type="taxonomic scope" value="Bacteria"/>
</dbReference>
<dbReference type="HOGENOM" id="CLU_000445_89_18_11"/>
<dbReference type="OrthoDB" id="9786919at2"/>
<dbReference type="Proteomes" id="UP000000806">
    <property type="component" value="Chromosome"/>
</dbReference>
<dbReference type="GO" id="GO:0005886">
    <property type="term" value="C:plasma membrane"/>
    <property type="evidence" value="ECO:0007669"/>
    <property type="project" value="UniProtKB-SubCell"/>
</dbReference>
<dbReference type="GO" id="GO:0005524">
    <property type="term" value="F:ATP binding"/>
    <property type="evidence" value="ECO:0007669"/>
    <property type="project" value="UniProtKB-KW"/>
</dbReference>
<dbReference type="GO" id="GO:0000155">
    <property type="term" value="F:phosphorelay sensor kinase activity"/>
    <property type="evidence" value="ECO:0007669"/>
    <property type="project" value="InterPro"/>
</dbReference>
<dbReference type="CDD" id="cd06225">
    <property type="entry name" value="HAMP"/>
    <property type="match status" value="1"/>
</dbReference>
<dbReference type="CDD" id="cd00075">
    <property type="entry name" value="HATPase"/>
    <property type="match status" value="1"/>
</dbReference>
<dbReference type="CDD" id="cd00082">
    <property type="entry name" value="HisKA"/>
    <property type="match status" value="1"/>
</dbReference>
<dbReference type="FunFam" id="1.10.287.130:FF:000010">
    <property type="entry name" value="Two-component sensor histidine kinase"/>
    <property type="match status" value="1"/>
</dbReference>
<dbReference type="FunFam" id="3.30.565.10:FF:000013">
    <property type="entry name" value="Two-component sensor histidine kinase"/>
    <property type="match status" value="1"/>
</dbReference>
<dbReference type="Gene3D" id="1.10.287.130">
    <property type="match status" value="1"/>
</dbReference>
<dbReference type="Gene3D" id="6.10.340.10">
    <property type="match status" value="1"/>
</dbReference>
<dbReference type="Gene3D" id="3.30.565.10">
    <property type="entry name" value="Histidine kinase-like ATPase, C-terminal domain"/>
    <property type="match status" value="1"/>
</dbReference>
<dbReference type="InterPro" id="IPR003660">
    <property type="entry name" value="HAMP_dom"/>
</dbReference>
<dbReference type="InterPro" id="IPR036890">
    <property type="entry name" value="HATPase_C_sf"/>
</dbReference>
<dbReference type="InterPro" id="IPR005467">
    <property type="entry name" value="His_kinase_dom"/>
</dbReference>
<dbReference type="InterPro" id="IPR003661">
    <property type="entry name" value="HisK_dim/P_dom"/>
</dbReference>
<dbReference type="InterPro" id="IPR036097">
    <property type="entry name" value="HisK_dim/P_sf"/>
</dbReference>
<dbReference type="InterPro" id="IPR047669">
    <property type="entry name" value="MtrAB_MtrB"/>
</dbReference>
<dbReference type="InterPro" id="IPR004358">
    <property type="entry name" value="Sig_transdc_His_kin-like_C"/>
</dbReference>
<dbReference type="NCBIfam" id="NF040691">
    <property type="entry name" value="MtrAB_MtrB"/>
    <property type="match status" value="1"/>
</dbReference>
<dbReference type="PANTHER" id="PTHR43547:SF2">
    <property type="entry name" value="HYBRID SIGNAL TRANSDUCTION HISTIDINE KINASE C"/>
    <property type="match status" value="1"/>
</dbReference>
<dbReference type="PANTHER" id="PTHR43547">
    <property type="entry name" value="TWO-COMPONENT HISTIDINE KINASE"/>
    <property type="match status" value="1"/>
</dbReference>
<dbReference type="Pfam" id="PF00672">
    <property type="entry name" value="HAMP"/>
    <property type="match status" value="1"/>
</dbReference>
<dbReference type="Pfam" id="PF02518">
    <property type="entry name" value="HATPase_c"/>
    <property type="match status" value="1"/>
</dbReference>
<dbReference type="Pfam" id="PF00512">
    <property type="entry name" value="HisKA"/>
    <property type="match status" value="1"/>
</dbReference>
<dbReference type="PRINTS" id="PR00344">
    <property type="entry name" value="BCTRLSENSOR"/>
</dbReference>
<dbReference type="SMART" id="SM00304">
    <property type="entry name" value="HAMP"/>
    <property type="match status" value="1"/>
</dbReference>
<dbReference type="SMART" id="SM00387">
    <property type="entry name" value="HATPase_c"/>
    <property type="match status" value="1"/>
</dbReference>
<dbReference type="SMART" id="SM00388">
    <property type="entry name" value="HisKA"/>
    <property type="match status" value="1"/>
</dbReference>
<dbReference type="SUPFAM" id="SSF55874">
    <property type="entry name" value="ATPase domain of HSP90 chaperone/DNA topoisomerase II/histidine kinase"/>
    <property type="match status" value="1"/>
</dbReference>
<dbReference type="SUPFAM" id="SSF158472">
    <property type="entry name" value="HAMP domain-like"/>
    <property type="match status" value="1"/>
</dbReference>
<dbReference type="SUPFAM" id="SSF47384">
    <property type="entry name" value="Homodimeric domain of signal transducing histidine kinase"/>
    <property type="match status" value="1"/>
</dbReference>
<dbReference type="PROSITE" id="PS50885">
    <property type="entry name" value="HAMP"/>
    <property type="match status" value="1"/>
</dbReference>
<dbReference type="PROSITE" id="PS50109">
    <property type="entry name" value="HIS_KIN"/>
    <property type="match status" value="1"/>
</dbReference>
<accession>Q9CCJ1</accession>
<gene>
    <name type="primary">mtrB</name>
    <name type="ordered locus">ML0774</name>
</gene>
<name>MTRB_MYCLE</name>